<gene>
    <name evidence="1" type="primary">mutS</name>
    <name type="ordered locus">Mbur_1704</name>
</gene>
<organism>
    <name type="scientific">Methanococcoides burtonii (strain DSM 6242 / NBRC 107633 / OCM 468 / ACE-M)</name>
    <dbReference type="NCBI Taxonomy" id="259564"/>
    <lineage>
        <taxon>Archaea</taxon>
        <taxon>Methanobacteriati</taxon>
        <taxon>Methanobacteriota</taxon>
        <taxon>Stenosarchaea group</taxon>
        <taxon>Methanomicrobia</taxon>
        <taxon>Methanosarcinales</taxon>
        <taxon>Methanosarcinaceae</taxon>
        <taxon>Methanococcoides</taxon>
    </lineage>
</organism>
<keyword id="KW-0067">ATP-binding</keyword>
<keyword id="KW-0227">DNA damage</keyword>
<keyword id="KW-0234">DNA repair</keyword>
<keyword id="KW-0238">DNA-binding</keyword>
<keyword id="KW-0547">Nucleotide-binding</keyword>
<comment type="function">
    <text evidence="1">This protein is involved in the repair of mismatches in DNA. It is possible that it carries out the mismatch recognition step. This protein has a weak ATPase activity.</text>
</comment>
<comment type="similarity">
    <text evidence="1">Belongs to the DNA mismatch repair MutS family.</text>
</comment>
<protein>
    <recommendedName>
        <fullName evidence="1">DNA mismatch repair protein MutS</fullName>
    </recommendedName>
</protein>
<feature type="chain" id="PRO_0000335245" description="DNA mismatch repair protein MutS">
    <location>
        <begin position="1"/>
        <end position="887"/>
    </location>
</feature>
<feature type="binding site" evidence="1">
    <location>
        <begin position="626"/>
        <end position="633"/>
    </location>
    <ligand>
        <name>ATP</name>
        <dbReference type="ChEBI" id="CHEBI:30616"/>
    </ligand>
</feature>
<name>MUTS_METBU</name>
<evidence type="ECO:0000255" key="1">
    <source>
        <dbReference type="HAMAP-Rule" id="MF_00096"/>
    </source>
</evidence>
<sequence length="887" mass="98569">MIKLTPAMKQYYDAKKQHSDALIFFRMGDFYESFGEDAKIIAKELEITLTTRGKDIEGEKMPLAGIPYHALDNYLPRLIKKGYKVAICEQLEDPKKAKGIIKRGVVRVVTPGTAIDTSMFTDPSNNYLMSISGGDGDYGVSFLDVSTGEFLTTQFADKSPYDRIASEAARMRPSECIISRTMFSDERLVERLKELNVLVQGFKDEAFDVDSSRKLLERHFNVSTLEGMGCAGLPYATSSAGAALDYALTTQMRELGHVSELSTYSDSEFMMLDSITLRNLEIVKNVRGEGNDTSILKVLDDTNTPMGGRLLQKWLLKPLINVDSIDHRLDALECLANDTMLRFDVRSHLSFVKDIERLIGRVVYGNSNARDLIALKRSLGSVPQIVESMGDDPGCEMLINIRDGLLGFEQLENIVKLIDDAIVDEPPVSVREGGMIRSGYNEKLDELKGMSTGGKTWIASFQQKERDRTGIKSLKVGYNRVFGYYIEITKSNIAQIPDDYIRKQTMRNAERFYTPELKEWEDVILSADEKITALENELFTEITSRIASHASDLQRIAVLIGQLDCTASLAEVAVNNNFVRPNITSDCKILIREGRHPVVEKTVRGGFVPNDTEMDCVDEQFLLITGPNMAGKSTYMRQVSLIVIMAQAGSFVPASHASIGIVDRVFTRVGAFDDLASGQSTFMVEMVELANILNNATPKSLVLLDEIGRGTSTYDGYSIAKAVVEYIHNKGRVGVRSLFATHYHQLTNISSSLKRVKNYHIAVKEDGDDLVFLRKIVPGATDKSYGIHVARLAGVPHKVTQRAKEVLQDIEDESVISKESDSKRGRKKKSAQYTQLMLFDPEGSSAPVAEPDPVVEELKELDVNSMTPIEALNKLSELQKKAGKGGK</sequence>
<dbReference type="EMBL" id="CP000300">
    <property type="protein sequence ID" value="ABE52597.1"/>
    <property type="molecule type" value="Genomic_DNA"/>
</dbReference>
<dbReference type="RefSeq" id="WP_011499740.1">
    <property type="nucleotide sequence ID" value="NC_007955.1"/>
</dbReference>
<dbReference type="SMR" id="Q12VC9"/>
<dbReference type="STRING" id="259564.Mbur_1704"/>
<dbReference type="GeneID" id="3997378"/>
<dbReference type="KEGG" id="mbu:Mbur_1704"/>
<dbReference type="HOGENOM" id="CLU_002472_1_3_2"/>
<dbReference type="OrthoDB" id="146065at2157"/>
<dbReference type="Proteomes" id="UP000001979">
    <property type="component" value="Chromosome"/>
</dbReference>
<dbReference type="GO" id="GO:0005524">
    <property type="term" value="F:ATP binding"/>
    <property type="evidence" value="ECO:0007669"/>
    <property type="project" value="UniProtKB-UniRule"/>
</dbReference>
<dbReference type="GO" id="GO:0140664">
    <property type="term" value="F:ATP-dependent DNA damage sensor activity"/>
    <property type="evidence" value="ECO:0007669"/>
    <property type="project" value="InterPro"/>
</dbReference>
<dbReference type="GO" id="GO:0003684">
    <property type="term" value="F:damaged DNA binding"/>
    <property type="evidence" value="ECO:0007669"/>
    <property type="project" value="UniProtKB-UniRule"/>
</dbReference>
<dbReference type="GO" id="GO:0030983">
    <property type="term" value="F:mismatched DNA binding"/>
    <property type="evidence" value="ECO:0007669"/>
    <property type="project" value="InterPro"/>
</dbReference>
<dbReference type="GO" id="GO:0006298">
    <property type="term" value="P:mismatch repair"/>
    <property type="evidence" value="ECO:0007669"/>
    <property type="project" value="UniProtKB-UniRule"/>
</dbReference>
<dbReference type="CDD" id="cd03284">
    <property type="entry name" value="ABC_MutS1"/>
    <property type="match status" value="1"/>
</dbReference>
<dbReference type="FunFam" id="1.10.1420.10:FF:000007">
    <property type="entry name" value="DNA mismatch repair protein MutS"/>
    <property type="match status" value="1"/>
</dbReference>
<dbReference type="FunFam" id="3.40.1170.10:FF:000001">
    <property type="entry name" value="DNA mismatch repair protein MutS"/>
    <property type="match status" value="1"/>
</dbReference>
<dbReference type="FunFam" id="3.40.50.300:FF:001579">
    <property type="entry name" value="DNA mismatch repair protein MutS"/>
    <property type="match status" value="1"/>
</dbReference>
<dbReference type="Gene3D" id="1.10.1420.10">
    <property type="match status" value="2"/>
</dbReference>
<dbReference type="Gene3D" id="3.40.1170.10">
    <property type="entry name" value="DNA repair protein MutS, domain I"/>
    <property type="match status" value="1"/>
</dbReference>
<dbReference type="Gene3D" id="3.30.420.110">
    <property type="entry name" value="MutS, connector domain"/>
    <property type="match status" value="1"/>
</dbReference>
<dbReference type="Gene3D" id="3.40.50.300">
    <property type="entry name" value="P-loop containing nucleotide triphosphate hydrolases"/>
    <property type="match status" value="1"/>
</dbReference>
<dbReference type="HAMAP" id="MF_00096">
    <property type="entry name" value="MutS"/>
    <property type="match status" value="1"/>
</dbReference>
<dbReference type="InterPro" id="IPR005748">
    <property type="entry name" value="DNA_mismatch_repair_MutS"/>
</dbReference>
<dbReference type="InterPro" id="IPR007695">
    <property type="entry name" value="DNA_mismatch_repair_MutS-lik_N"/>
</dbReference>
<dbReference type="InterPro" id="IPR017261">
    <property type="entry name" value="DNA_mismatch_repair_MutS/MSH"/>
</dbReference>
<dbReference type="InterPro" id="IPR000432">
    <property type="entry name" value="DNA_mismatch_repair_MutS_C"/>
</dbReference>
<dbReference type="InterPro" id="IPR007861">
    <property type="entry name" value="DNA_mismatch_repair_MutS_clamp"/>
</dbReference>
<dbReference type="InterPro" id="IPR007696">
    <property type="entry name" value="DNA_mismatch_repair_MutS_core"/>
</dbReference>
<dbReference type="InterPro" id="IPR016151">
    <property type="entry name" value="DNA_mismatch_repair_MutS_N"/>
</dbReference>
<dbReference type="InterPro" id="IPR036187">
    <property type="entry name" value="DNA_mismatch_repair_MutS_sf"/>
</dbReference>
<dbReference type="InterPro" id="IPR007860">
    <property type="entry name" value="DNA_mmatch_repair_MutS_con_dom"/>
</dbReference>
<dbReference type="InterPro" id="IPR045076">
    <property type="entry name" value="MutS"/>
</dbReference>
<dbReference type="InterPro" id="IPR036678">
    <property type="entry name" value="MutS_con_dom_sf"/>
</dbReference>
<dbReference type="InterPro" id="IPR027417">
    <property type="entry name" value="P-loop_NTPase"/>
</dbReference>
<dbReference type="NCBIfam" id="TIGR01070">
    <property type="entry name" value="mutS1"/>
    <property type="match status" value="1"/>
</dbReference>
<dbReference type="NCBIfam" id="NF003810">
    <property type="entry name" value="PRK05399.1"/>
    <property type="match status" value="1"/>
</dbReference>
<dbReference type="PANTHER" id="PTHR11361:SF34">
    <property type="entry name" value="DNA MISMATCH REPAIR PROTEIN MSH1, MITOCHONDRIAL"/>
    <property type="match status" value="1"/>
</dbReference>
<dbReference type="PANTHER" id="PTHR11361">
    <property type="entry name" value="DNA MISMATCH REPAIR PROTEIN MUTS FAMILY MEMBER"/>
    <property type="match status" value="1"/>
</dbReference>
<dbReference type="Pfam" id="PF01624">
    <property type="entry name" value="MutS_I"/>
    <property type="match status" value="1"/>
</dbReference>
<dbReference type="Pfam" id="PF05188">
    <property type="entry name" value="MutS_II"/>
    <property type="match status" value="1"/>
</dbReference>
<dbReference type="Pfam" id="PF05192">
    <property type="entry name" value="MutS_III"/>
    <property type="match status" value="1"/>
</dbReference>
<dbReference type="Pfam" id="PF05190">
    <property type="entry name" value="MutS_IV"/>
    <property type="match status" value="1"/>
</dbReference>
<dbReference type="Pfam" id="PF00488">
    <property type="entry name" value="MutS_V"/>
    <property type="match status" value="1"/>
</dbReference>
<dbReference type="PIRSF" id="PIRSF037677">
    <property type="entry name" value="DNA_mis_repair_Msh6"/>
    <property type="match status" value="1"/>
</dbReference>
<dbReference type="SMART" id="SM00534">
    <property type="entry name" value="MUTSac"/>
    <property type="match status" value="1"/>
</dbReference>
<dbReference type="SMART" id="SM00533">
    <property type="entry name" value="MUTSd"/>
    <property type="match status" value="1"/>
</dbReference>
<dbReference type="SUPFAM" id="SSF55271">
    <property type="entry name" value="DNA repair protein MutS, domain I"/>
    <property type="match status" value="1"/>
</dbReference>
<dbReference type="SUPFAM" id="SSF53150">
    <property type="entry name" value="DNA repair protein MutS, domain II"/>
    <property type="match status" value="1"/>
</dbReference>
<dbReference type="SUPFAM" id="SSF48334">
    <property type="entry name" value="DNA repair protein MutS, domain III"/>
    <property type="match status" value="1"/>
</dbReference>
<dbReference type="SUPFAM" id="SSF52540">
    <property type="entry name" value="P-loop containing nucleoside triphosphate hydrolases"/>
    <property type="match status" value="1"/>
</dbReference>
<dbReference type="PROSITE" id="PS00486">
    <property type="entry name" value="DNA_MISMATCH_REPAIR_2"/>
    <property type="match status" value="1"/>
</dbReference>
<proteinExistence type="inferred from homology"/>
<reference key="1">
    <citation type="journal article" date="2009" name="ISME J.">
        <title>The genome sequence of the psychrophilic archaeon, Methanococcoides burtonii: the role of genome evolution in cold adaptation.</title>
        <authorList>
            <person name="Allen M.A."/>
            <person name="Lauro F.M."/>
            <person name="Williams T.J."/>
            <person name="Burg D."/>
            <person name="Siddiqui K.S."/>
            <person name="De Francisci D."/>
            <person name="Chong K.W."/>
            <person name="Pilak O."/>
            <person name="Chew H.H."/>
            <person name="De Maere M.Z."/>
            <person name="Ting L."/>
            <person name="Katrib M."/>
            <person name="Ng C."/>
            <person name="Sowers K.R."/>
            <person name="Galperin M.Y."/>
            <person name="Anderson I.J."/>
            <person name="Ivanova N."/>
            <person name="Dalin E."/>
            <person name="Martinez M."/>
            <person name="Lapidus A."/>
            <person name="Hauser L."/>
            <person name="Land M."/>
            <person name="Thomas T."/>
            <person name="Cavicchioli R."/>
        </authorList>
    </citation>
    <scope>NUCLEOTIDE SEQUENCE [LARGE SCALE GENOMIC DNA]</scope>
    <source>
        <strain>DSM 6242 / NBRC 107633 / OCM 468 / ACE-M</strain>
    </source>
</reference>
<accession>Q12VC9</accession>